<proteinExistence type="inferred from homology"/>
<feature type="chain" id="PRO_0000059990" description="Sulfate transport system permease protein CysT">
    <location>
        <begin position="1"/>
        <end position="277"/>
    </location>
</feature>
<feature type="transmembrane region" description="Helical" evidence="2">
    <location>
        <begin position="17"/>
        <end position="37"/>
    </location>
</feature>
<feature type="transmembrane region" description="Helical" evidence="2">
    <location>
        <begin position="64"/>
        <end position="84"/>
    </location>
</feature>
<feature type="transmembrane region" description="Helical" evidence="2">
    <location>
        <begin position="99"/>
        <end position="119"/>
    </location>
</feature>
<feature type="transmembrane region" description="Helical" evidence="2">
    <location>
        <begin position="136"/>
        <end position="156"/>
    </location>
</feature>
<feature type="transmembrane region" description="Helical" evidence="2">
    <location>
        <begin position="188"/>
        <end position="205"/>
    </location>
</feature>
<feature type="transmembrane region" description="Helical" evidence="2">
    <location>
        <begin position="215"/>
        <end position="235"/>
    </location>
</feature>
<feature type="transmembrane region" description="Helical" evidence="2">
    <location>
        <begin position="243"/>
        <end position="263"/>
    </location>
</feature>
<feature type="domain" description="ABC transmembrane type-1" evidence="2">
    <location>
        <begin position="60"/>
        <end position="263"/>
    </location>
</feature>
<organism>
    <name type="scientific">Salmonella typhimurium (strain LT2 / SGSC1412 / ATCC 700720)</name>
    <dbReference type="NCBI Taxonomy" id="99287"/>
    <lineage>
        <taxon>Bacteria</taxon>
        <taxon>Pseudomonadati</taxon>
        <taxon>Pseudomonadota</taxon>
        <taxon>Gammaproteobacteria</taxon>
        <taxon>Enterobacterales</taxon>
        <taxon>Enterobacteriaceae</taxon>
        <taxon>Salmonella</taxon>
    </lineage>
</organism>
<protein>
    <recommendedName>
        <fullName>Sulfate transport system permease protein CysT</fullName>
    </recommendedName>
</protein>
<keyword id="KW-0997">Cell inner membrane</keyword>
<keyword id="KW-1003">Cell membrane</keyword>
<keyword id="KW-0472">Membrane</keyword>
<keyword id="KW-1185">Reference proteome</keyword>
<keyword id="KW-0764">Sulfate transport</keyword>
<keyword id="KW-0812">Transmembrane</keyword>
<keyword id="KW-1133">Transmembrane helix</keyword>
<keyword id="KW-0813">Transport</keyword>
<gene>
    <name type="primary">cysU</name>
    <name type="synonym">cysT</name>
    <name type="ordered locus">STM2443</name>
</gene>
<comment type="function">
    <text evidence="1">Part of the ABC transporter complex CysAWTP (TC 3.A.1.6.1) involved in sulfate/thiosulfate import. Probably responsible for the translocation of the substrate across the membrane (By similarity).</text>
</comment>
<comment type="subunit">
    <text evidence="3">The complex is composed of two ATP-binding proteins (CysA), two transmembrane proteins (CysT and CysW) and a solute-binding protein (CysP).</text>
</comment>
<comment type="subcellular location">
    <subcellularLocation>
        <location evidence="1">Cell inner membrane</location>
        <topology evidence="2">Multi-pass membrane protein</topology>
    </subcellularLocation>
</comment>
<comment type="similarity">
    <text evidence="3">Belongs to the binding-protein-dependent transport system permease family. CysTW subfamily.</text>
</comment>
<reference key="1">
    <citation type="journal article" date="2001" name="Nature">
        <title>Complete genome sequence of Salmonella enterica serovar Typhimurium LT2.</title>
        <authorList>
            <person name="McClelland M."/>
            <person name="Sanderson K.E."/>
            <person name="Spieth J."/>
            <person name="Clifton S.W."/>
            <person name="Latreille P."/>
            <person name="Courtney L."/>
            <person name="Porwollik S."/>
            <person name="Ali J."/>
            <person name="Dante M."/>
            <person name="Du F."/>
            <person name="Hou S."/>
            <person name="Layman D."/>
            <person name="Leonard S."/>
            <person name="Nguyen C."/>
            <person name="Scott K."/>
            <person name="Holmes A."/>
            <person name="Grewal N."/>
            <person name="Mulvaney E."/>
            <person name="Ryan E."/>
            <person name="Sun H."/>
            <person name="Florea L."/>
            <person name="Miller W."/>
            <person name="Stoneking T."/>
            <person name="Nhan M."/>
            <person name="Waterston R."/>
            <person name="Wilson R.K."/>
        </authorList>
    </citation>
    <scope>NUCLEOTIDE SEQUENCE [LARGE SCALE GENOMIC DNA]</scope>
    <source>
        <strain>LT2 / SGSC1412 / ATCC 700720</strain>
    </source>
</reference>
<reference key="2">
    <citation type="journal article" date="1991" name="J. Bacteriol.">
        <title>The cysP promoter of Salmonella typhimurium: characterization of two binding sites for CysB protein, studies of in vivo transcription initiation, and demonstration of the anti-inducer effects of thiosulfate.</title>
        <authorList>
            <person name="Hryniewicz M.M."/>
            <person name="Kredich N.M."/>
        </authorList>
    </citation>
    <scope>NUCLEOTIDE SEQUENCE [GENOMIC DNA] OF 1-15</scope>
    <source>
        <strain>LT2</strain>
    </source>
</reference>
<dbReference type="EMBL" id="AE006468">
    <property type="protein sequence ID" value="AAL21337.1"/>
    <property type="molecule type" value="Genomic_DNA"/>
</dbReference>
<dbReference type="RefSeq" id="NP_461378.1">
    <property type="nucleotide sequence ID" value="NC_003197.2"/>
</dbReference>
<dbReference type="RefSeq" id="WP_000881745.1">
    <property type="nucleotide sequence ID" value="NC_003197.2"/>
</dbReference>
<dbReference type="SMR" id="P41032"/>
<dbReference type="STRING" id="99287.STM2443"/>
<dbReference type="PaxDb" id="99287-STM2443"/>
<dbReference type="GeneID" id="1253965"/>
<dbReference type="KEGG" id="stm:STM2443"/>
<dbReference type="PATRIC" id="fig|99287.12.peg.2581"/>
<dbReference type="HOGENOM" id="CLU_016047_14_0_6"/>
<dbReference type="OMA" id="NIAWQTE"/>
<dbReference type="PhylomeDB" id="P41032"/>
<dbReference type="BioCyc" id="SENT99287:STM2443-MONOMER"/>
<dbReference type="Proteomes" id="UP000001014">
    <property type="component" value="Chromosome"/>
</dbReference>
<dbReference type="GO" id="GO:0005886">
    <property type="term" value="C:plasma membrane"/>
    <property type="evidence" value="ECO:0000318"/>
    <property type="project" value="GO_Central"/>
</dbReference>
<dbReference type="GO" id="GO:0015419">
    <property type="term" value="F:ABC-type sulfate transporter activity"/>
    <property type="evidence" value="ECO:0007669"/>
    <property type="project" value="InterPro"/>
</dbReference>
<dbReference type="CDD" id="cd06261">
    <property type="entry name" value="TM_PBP2"/>
    <property type="match status" value="1"/>
</dbReference>
<dbReference type="FunFam" id="1.10.3720.10:FF:000004">
    <property type="entry name" value="Sulfate transport system permease protein CysT"/>
    <property type="match status" value="1"/>
</dbReference>
<dbReference type="Gene3D" id="1.10.3720.10">
    <property type="entry name" value="MetI-like"/>
    <property type="match status" value="1"/>
</dbReference>
<dbReference type="InterPro" id="IPR011865">
    <property type="entry name" value="CysT_permease"/>
</dbReference>
<dbReference type="InterPro" id="IPR000515">
    <property type="entry name" value="MetI-like"/>
</dbReference>
<dbReference type="InterPro" id="IPR035906">
    <property type="entry name" value="MetI-like_sf"/>
</dbReference>
<dbReference type="InterPro" id="IPR005667">
    <property type="entry name" value="Sulph_transpt2"/>
</dbReference>
<dbReference type="NCBIfam" id="TIGR00969">
    <property type="entry name" value="3a0106s02"/>
    <property type="match status" value="1"/>
</dbReference>
<dbReference type="NCBIfam" id="TIGR02139">
    <property type="entry name" value="permease_CysT"/>
    <property type="match status" value="1"/>
</dbReference>
<dbReference type="NCBIfam" id="NF008208">
    <property type="entry name" value="PRK10971.1"/>
    <property type="match status" value="1"/>
</dbReference>
<dbReference type="PANTHER" id="PTHR30406">
    <property type="entry name" value="SULFATE TRANSPORT SYSTEM PERMEASE PROTEIN"/>
    <property type="match status" value="1"/>
</dbReference>
<dbReference type="PANTHER" id="PTHR30406:SF10">
    <property type="entry name" value="SULFATE TRANSPORT SYSTEM PERMEASE PROTEIN CYST"/>
    <property type="match status" value="1"/>
</dbReference>
<dbReference type="Pfam" id="PF00528">
    <property type="entry name" value="BPD_transp_1"/>
    <property type="match status" value="1"/>
</dbReference>
<dbReference type="SUPFAM" id="SSF161098">
    <property type="entry name" value="MetI-like"/>
    <property type="match status" value="1"/>
</dbReference>
<dbReference type="PROSITE" id="PS50928">
    <property type="entry name" value="ABC_TM1"/>
    <property type="match status" value="1"/>
</dbReference>
<name>CYST_SALTY</name>
<accession>P41032</accession>
<evidence type="ECO:0000250" key="1"/>
<evidence type="ECO:0000255" key="2">
    <source>
        <dbReference type="PROSITE-ProRule" id="PRU00441"/>
    </source>
</evidence>
<evidence type="ECO:0000305" key="3"/>
<sequence>MLAVSSRRVLPGFTLSLGTSLLFVCLILLLPLSALVMQLSQMSWAQYWDVVTNPQVVAAYKVTLLAAFVASIFNGVFGLLMAWILTRYRFPGRTLLDALMDLPFALPTAVAGLTLASLFSVNGFYGQFLAQFDIKVTYTWLGIAVAMAFTSIPFVVRTVQPVLEELGPEYEEAAQTLGATRLQSFRKVVLPELSPALIAGVALSFTRSLGEFGAVIFIAGNIAWKTEVTSLMIFVRLQEFDYPAASAIASVILAASLLLLFSINTLQSRFGRRVVGH</sequence>